<proteinExistence type="inferred from homology"/>
<gene>
    <name evidence="1" type="primary">glmM</name>
    <name type="ordered locus">CJA_2672</name>
</gene>
<protein>
    <recommendedName>
        <fullName evidence="1">Phosphoglucosamine mutase</fullName>
        <ecNumber evidence="1">5.4.2.10</ecNumber>
    </recommendedName>
</protein>
<sequence>MTRKYFGTDGIRGLVGEGPITPDFMLKLGWAAGRVLMDRFDGSNMILIGKDTRISGYMFESALQAGLINAGVDVGLLGPMPTPGVAYLTRTFQAQAGIVISASHNSYVDNGIKFFGGNGTKLPDDLEDLIEKQLEQPMVTAEKLGKAKRIQDASGRYIEFCKGTMPWGFNLKGMHLVIDCAHGATYNIAPNVFSELGAHVTPIFVDPNGTNINRGCGSTKPEALQEKVVELGADLGIAFDGDGDRVVFVDHKGELVDGDELLYIIAAYQQEYAGGCDGVVGTLMSNFGFELGLKKLGIPFARAKVGDRYVIEMMRERGWRLGGENSGHIVCSNVTTTGDGIISALQVLLAITTLGQKLHKIKKGMAKLPQVMINVHMAKRADLANNETIQRAVKLTEEKLGGSGRVLLRPSGTEPVVRVMVEGEDKAQVKELAQELASVVEAALS</sequence>
<organism>
    <name type="scientific">Cellvibrio japonicus (strain Ueda107)</name>
    <name type="common">Pseudomonas fluorescens subsp. cellulosa</name>
    <dbReference type="NCBI Taxonomy" id="498211"/>
    <lineage>
        <taxon>Bacteria</taxon>
        <taxon>Pseudomonadati</taxon>
        <taxon>Pseudomonadota</taxon>
        <taxon>Gammaproteobacteria</taxon>
        <taxon>Cellvibrionales</taxon>
        <taxon>Cellvibrionaceae</taxon>
        <taxon>Cellvibrio</taxon>
    </lineage>
</organism>
<feature type="chain" id="PRO_1000201072" description="Phosphoglucosamine mutase">
    <location>
        <begin position="1"/>
        <end position="445"/>
    </location>
</feature>
<feature type="active site" description="Phosphoserine intermediate" evidence="1">
    <location>
        <position position="103"/>
    </location>
</feature>
<feature type="binding site" description="via phosphate group" evidence="1">
    <location>
        <position position="103"/>
    </location>
    <ligand>
        <name>Mg(2+)</name>
        <dbReference type="ChEBI" id="CHEBI:18420"/>
    </ligand>
</feature>
<feature type="binding site" evidence="1">
    <location>
        <position position="240"/>
    </location>
    <ligand>
        <name>Mg(2+)</name>
        <dbReference type="ChEBI" id="CHEBI:18420"/>
    </ligand>
</feature>
<feature type="binding site" evidence="1">
    <location>
        <position position="242"/>
    </location>
    <ligand>
        <name>Mg(2+)</name>
        <dbReference type="ChEBI" id="CHEBI:18420"/>
    </ligand>
</feature>
<feature type="binding site" evidence="1">
    <location>
        <position position="244"/>
    </location>
    <ligand>
        <name>Mg(2+)</name>
        <dbReference type="ChEBI" id="CHEBI:18420"/>
    </ligand>
</feature>
<feature type="modified residue" description="Phosphoserine" evidence="1">
    <location>
        <position position="103"/>
    </location>
</feature>
<accession>B3PLQ1</accession>
<evidence type="ECO:0000255" key="1">
    <source>
        <dbReference type="HAMAP-Rule" id="MF_01554"/>
    </source>
</evidence>
<dbReference type="EC" id="5.4.2.10" evidence="1"/>
<dbReference type="EMBL" id="CP000934">
    <property type="protein sequence ID" value="ACE83954.1"/>
    <property type="molecule type" value="Genomic_DNA"/>
</dbReference>
<dbReference type="RefSeq" id="WP_012488266.1">
    <property type="nucleotide sequence ID" value="NC_010995.1"/>
</dbReference>
<dbReference type="SMR" id="B3PLQ1"/>
<dbReference type="STRING" id="498211.CJA_2672"/>
<dbReference type="KEGG" id="cja:CJA_2672"/>
<dbReference type="eggNOG" id="COG1109">
    <property type="taxonomic scope" value="Bacteria"/>
</dbReference>
<dbReference type="HOGENOM" id="CLU_016950_7_0_6"/>
<dbReference type="OrthoDB" id="9803322at2"/>
<dbReference type="Proteomes" id="UP000001036">
    <property type="component" value="Chromosome"/>
</dbReference>
<dbReference type="GO" id="GO:0005829">
    <property type="term" value="C:cytosol"/>
    <property type="evidence" value="ECO:0007669"/>
    <property type="project" value="TreeGrafter"/>
</dbReference>
<dbReference type="GO" id="GO:0000287">
    <property type="term" value="F:magnesium ion binding"/>
    <property type="evidence" value="ECO:0007669"/>
    <property type="project" value="UniProtKB-UniRule"/>
</dbReference>
<dbReference type="GO" id="GO:0008966">
    <property type="term" value="F:phosphoglucosamine mutase activity"/>
    <property type="evidence" value="ECO:0007669"/>
    <property type="project" value="UniProtKB-UniRule"/>
</dbReference>
<dbReference type="GO" id="GO:0004615">
    <property type="term" value="F:phosphomannomutase activity"/>
    <property type="evidence" value="ECO:0007669"/>
    <property type="project" value="TreeGrafter"/>
</dbReference>
<dbReference type="GO" id="GO:0005975">
    <property type="term" value="P:carbohydrate metabolic process"/>
    <property type="evidence" value="ECO:0007669"/>
    <property type="project" value="InterPro"/>
</dbReference>
<dbReference type="GO" id="GO:0009252">
    <property type="term" value="P:peptidoglycan biosynthetic process"/>
    <property type="evidence" value="ECO:0007669"/>
    <property type="project" value="TreeGrafter"/>
</dbReference>
<dbReference type="GO" id="GO:0006048">
    <property type="term" value="P:UDP-N-acetylglucosamine biosynthetic process"/>
    <property type="evidence" value="ECO:0007669"/>
    <property type="project" value="TreeGrafter"/>
</dbReference>
<dbReference type="CDD" id="cd05802">
    <property type="entry name" value="GlmM"/>
    <property type="match status" value="1"/>
</dbReference>
<dbReference type="FunFam" id="3.30.310.50:FF:000001">
    <property type="entry name" value="Phosphoglucosamine mutase"/>
    <property type="match status" value="1"/>
</dbReference>
<dbReference type="FunFam" id="3.40.120.10:FF:000001">
    <property type="entry name" value="Phosphoglucosamine mutase"/>
    <property type="match status" value="1"/>
</dbReference>
<dbReference type="FunFam" id="3.40.120.10:FF:000003">
    <property type="entry name" value="Phosphoglucosamine mutase"/>
    <property type="match status" value="1"/>
</dbReference>
<dbReference type="Gene3D" id="3.40.120.10">
    <property type="entry name" value="Alpha-D-Glucose-1,6-Bisphosphate, subunit A, domain 3"/>
    <property type="match status" value="3"/>
</dbReference>
<dbReference type="Gene3D" id="3.30.310.50">
    <property type="entry name" value="Alpha-D-phosphohexomutase, C-terminal domain"/>
    <property type="match status" value="1"/>
</dbReference>
<dbReference type="HAMAP" id="MF_01554_B">
    <property type="entry name" value="GlmM_B"/>
    <property type="match status" value="1"/>
</dbReference>
<dbReference type="InterPro" id="IPR005844">
    <property type="entry name" value="A-D-PHexomutase_a/b/a-I"/>
</dbReference>
<dbReference type="InterPro" id="IPR016055">
    <property type="entry name" value="A-D-PHexomutase_a/b/a-I/II/III"/>
</dbReference>
<dbReference type="InterPro" id="IPR005845">
    <property type="entry name" value="A-D-PHexomutase_a/b/a-II"/>
</dbReference>
<dbReference type="InterPro" id="IPR005846">
    <property type="entry name" value="A-D-PHexomutase_a/b/a-III"/>
</dbReference>
<dbReference type="InterPro" id="IPR005843">
    <property type="entry name" value="A-D-PHexomutase_C"/>
</dbReference>
<dbReference type="InterPro" id="IPR036900">
    <property type="entry name" value="A-D-PHexomutase_C_sf"/>
</dbReference>
<dbReference type="InterPro" id="IPR005841">
    <property type="entry name" value="Alpha-D-phosphohexomutase_SF"/>
</dbReference>
<dbReference type="InterPro" id="IPR006352">
    <property type="entry name" value="GlmM_bact"/>
</dbReference>
<dbReference type="InterPro" id="IPR050060">
    <property type="entry name" value="Phosphoglucosamine_mutase"/>
</dbReference>
<dbReference type="NCBIfam" id="TIGR01455">
    <property type="entry name" value="glmM"/>
    <property type="match status" value="1"/>
</dbReference>
<dbReference type="NCBIfam" id="NF008139">
    <property type="entry name" value="PRK10887.1"/>
    <property type="match status" value="1"/>
</dbReference>
<dbReference type="PANTHER" id="PTHR42946:SF1">
    <property type="entry name" value="PHOSPHOGLUCOMUTASE (ALPHA-D-GLUCOSE-1,6-BISPHOSPHATE-DEPENDENT)"/>
    <property type="match status" value="1"/>
</dbReference>
<dbReference type="PANTHER" id="PTHR42946">
    <property type="entry name" value="PHOSPHOHEXOSE MUTASE"/>
    <property type="match status" value="1"/>
</dbReference>
<dbReference type="Pfam" id="PF02878">
    <property type="entry name" value="PGM_PMM_I"/>
    <property type="match status" value="1"/>
</dbReference>
<dbReference type="Pfam" id="PF02879">
    <property type="entry name" value="PGM_PMM_II"/>
    <property type="match status" value="1"/>
</dbReference>
<dbReference type="Pfam" id="PF02880">
    <property type="entry name" value="PGM_PMM_III"/>
    <property type="match status" value="1"/>
</dbReference>
<dbReference type="Pfam" id="PF00408">
    <property type="entry name" value="PGM_PMM_IV"/>
    <property type="match status" value="1"/>
</dbReference>
<dbReference type="PRINTS" id="PR00509">
    <property type="entry name" value="PGMPMM"/>
</dbReference>
<dbReference type="SUPFAM" id="SSF55957">
    <property type="entry name" value="Phosphoglucomutase, C-terminal domain"/>
    <property type="match status" value="1"/>
</dbReference>
<dbReference type="SUPFAM" id="SSF53738">
    <property type="entry name" value="Phosphoglucomutase, first 3 domains"/>
    <property type="match status" value="3"/>
</dbReference>
<keyword id="KW-0413">Isomerase</keyword>
<keyword id="KW-0460">Magnesium</keyword>
<keyword id="KW-0479">Metal-binding</keyword>
<keyword id="KW-0597">Phosphoprotein</keyword>
<keyword id="KW-1185">Reference proteome</keyword>
<reference key="1">
    <citation type="journal article" date="2008" name="J. Bacteriol.">
        <title>Insights into plant cell wall degradation from the genome sequence of the soil bacterium Cellvibrio japonicus.</title>
        <authorList>
            <person name="DeBoy R.T."/>
            <person name="Mongodin E.F."/>
            <person name="Fouts D.E."/>
            <person name="Tailford L.E."/>
            <person name="Khouri H."/>
            <person name="Emerson J.B."/>
            <person name="Mohamoud Y."/>
            <person name="Watkins K."/>
            <person name="Henrissat B."/>
            <person name="Gilbert H.J."/>
            <person name="Nelson K.E."/>
        </authorList>
    </citation>
    <scope>NUCLEOTIDE SEQUENCE [LARGE SCALE GENOMIC DNA]</scope>
    <source>
        <strain>Ueda107</strain>
    </source>
</reference>
<comment type="function">
    <text evidence="1">Catalyzes the conversion of glucosamine-6-phosphate to glucosamine-1-phosphate.</text>
</comment>
<comment type="catalytic activity">
    <reaction evidence="1">
        <text>alpha-D-glucosamine 1-phosphate = D-glucosamine 6-phosphate</text>
        <dbReference type="Rhea" id="RHEA:23424"/>
        <dbReference type="ChEBI" id="CHEBI:58516"/>
        <dbReference type="ChEBI" id="CHEBI:58725"/>
        <dbReference type="EC" id="5.4.2.10"/>
    </reaction>
</comment>
<comment type="cofactor">
    <cofactor evidence="1">
        <name>Mg(2+)</name>
        <dbReference type="ChEBI" id="CHEBI:18420"/>
    </cofactor>
    <text evidence="1">Binds 1 Mg(2+) ion per subunit.</text>
</comment>
<comment type="PTM">
    <text evidence="1">Activated by phosphorylation.</text>
</comment>
<comment type="similarity">
    <text evidence="1">Belongs to the phosphohexose mutase family.</text>
</comment>
<name>GLMM_CELJU</name>